<evidence type="ECO:0000250" key="1">
    <source>
        <dbReference type="UniProtKB" id="P09511"/>
    </source>
</evidence>
<evidence type="ECO:0000250" key="2">
    <source>
        <dbReference type="UniProtKB" id="P10471"/>
    </source>
</evidence>
<evidence type="ECO:0000250" key="3">
    <source>
        <dbReference type="UniProtKB" id="P17524"/>
    </source>
</evidence>
<evidence type="ECO:0000256" key="4">
    <source>
        <dbReference type="SAM" id="MobiDB-lite"/>
    </source>
</evidence>
<evidence type="ECO:0000305" key="5"/>
<protein>
    <recommendedName>
        <fullName>Movement protein</fullName>
        <shortName>MP</shortName>
    </recommendedName>
    <alternativeName>
        <fullName>20 kDa protein</fullName>
    </alternativeName>
</protein>
<comment type="function">
    <text evidence="2 3 5">Together with movement protein P3a, facilitates long-distance movement of virions in host (By similarity). Transports viral genome to neighboring plant cells directly through plasmosdesmata, without any budding (Probable). The movement protein allows efficient cell to cell propagation, by bypassing the host cell wall barrier (Probable). Binds ssRNA (By similarity).</text>
</comment>
<comment type="subunit">
    <text evidence="2">Homodimer.</text>
</comment>
<comment type="subcellular location">
    <subcellularLocation>
        <location evidence="1">Host cell junction</location>
        <location evidence="1">Host plasmodesma</location>
    </subcellularLocation>
    <subcellularLocation>
        <location evidence="1">Host Golgi apparatus</location>
    </subcellularLocation>
</comment>
<comment type="domain">
    <text evidence="2">The N-terminus is involved in homodimerization (By similarity). The C-terminus binds ssRNA (By similarity). The C-terminus is phosphorylated (By similarity).</text>
</comment>
<comment type="PTM">
    <text evidence="2">Phosphorylated.</text>
</comment>
<comment type="miscellaneous">
    <text evidence="5">Poleroviruses are transmitted by aphids directly into phloem tissue. The virus replicates most efficiently in phloem companion cells and then moves through plasmodesmata between companion cells or into sieve elements for long distance transport.</text>
</comment>
<comment type="similarity">
    <text evidence="5">Belongs to the polerovirus movement protein family.</text>
</comment>
<keyword id="KW-1031">Host cell junction</keyword>
<keyword id="KW-1040">Host Golgi apparatus</keyword>
<keyword id="KW-0597">Phosphoprotein</keyword>
<keyword id="KW-0813">Transport</keyword>
<keyword id="KW-0916">Viral movement protein</keyword>
<sequence>MEEDDHGGKHDALSALSQWLWSKPLGQHNADLDDDEEVTTGQEELFLPEEQAQARHLFSRKTISREVPADESRSGRVYQTAQHSLMEYSRPTMSIKSRWSFWSSSPKPLPKTPVPSLTSWTHTVNSTPFPQLSTSSGSQSPGKRRLQRLTSMERNGTTLPRTNSGSSTKAMVLHR</sequence>
<name>MVP_BWYVG</name>
<dbReference type="EMBL" id="X13062">
    <property type="protein sequence ID" value="CAA31460.1"/>
    <property type="molecule type" value="Genomic_RNA"/>
</dbReference>
<dbReference type="PIR" id="S01936">
    <property type="entry name" value="GNVQGB"/>
</dbReference>
<dbReference type="GO" id="GO:0044177">
    <property type="term" value="C:host cell Golgi apparatus"/>
    <property type="evidence" value="ECO:0007669"/>
    <property type="project" value="UniProtKB-SubCell"/>
</dbReference>
<dbReference type="GO" id="GO:0044219">
    <property type="term" value="C:host cell plasmodesma"/>
    <property type="evidence" value="ECO:0007669"/>
    <property type="project" value="UniProtKB-SubCell"/>
</dbReference>
<dbReference type="GO" id="GO:0046740">
    <property type="term" value="P:transport of virus in host, cell to cell"/>
    <property type="evidence" value="ECO:0007669"/>
    <property type="project" value="UniProtKB-KW"/>
</dbReference>
<dbReference type="InterPro" id="IPR001964">
    <property type="entry name" value="Luteo_VPG"/>
</dbReference>
<dbReference type="Pfam" id="PF01659">
    <property type="entry name" value="Luteo_Vpg"/>
    <property type="match status" value="1"/>
</dbReference>
<dbReference type="PRINTS" id="PR00912">
    <property type="entry name" value="LVIRUSORF5"/>
</dbReference>
<accession>P09512</accession>
<feature type="chain" id="PRO_0000222417" description="Movement protein">
    <location>
        <begin position="1"/>
        <end position="175"/>
    </location>
</feature>
<feature type="region of interest" description="Homodimerization" evidence="2">
    <location>
        <begin position="30"/>
        <end position="47"/>
    </location>
</feature>
<feature type="region of interest" description="RNA-binding" evidence="2">
    <location>
        <begin position="50"/>
        <end position="156"/>
    </location>
</feature>
<feature type="region of interest" description="Disordered" evidence="4">
    <location>
        <begin position="58"/>
        <end position="89"/>
    </location>
</feature>
<feature type="region of interest" description="Disordered" evidence="4">
    <location>
        <begin position="103"/>
        <end position="175"/>
    </location>
</feature>
<feature type="compositionally biased region" description="Basic and acidic residues" evidence="4">
    <location>
        <begin position="63"/>
        <end position="74"/>
    </location>
</feature>
<feature type="compositionally biased region" description="Polar residues" evidence="4">
    <location>
        <begin position="115"/>
        <end position="141"/>
    </location>
</feature>
<feature type="compositionally biased region" description="Polar residues" evidence="4">
    <location>
        <begin position="148"/>
        <end position="169"/>
    </location>
</feature>
<feature type="modified residue" description="Phosphoserine" evidence="2">
    <location>
        <position position="64"/>
    </location>
</feature>
<feature type="modified residue" description="Phosphoserine" evidence="2">
    <location>
        <position position="133"/>
    </location>
</feature>
<reference key="1">
    <citation type="journal article" date="1988" name="Nucleic Acids Res.">
        <title>Nucleotide sequence of beet western yellows virus RNA.</title>
        <authorList>
            <person name="Veidt I."/>
            <person name="Lot H."/>
            <person name="Leiser M."/>
            <person name="Scheidecker D."/>
            <person name="Guilley H."/>
            <person name="Richards K.E."/>
            <person name="Jonard G."/>
        </authorList>
    </citation>
    <scope>NUCLEOTIDE SEQUENCE [GENOMIC RNA]</scope>
</reference>
<organismHost>
    <name type="scientific">Beta vulgaris</name>
    <name type="common">Sugar beet</name>
    <dbReference type="NCBI Taxonomy" id="161934"/>
</organismHost>
<organismHost>
    <name type="scientific">Brassica napus subsp. rapifera</name>
    <dbReference type="NCBI Taxonomy" id="3709"/>
</organismHost>
<organismHost>
    <name type="scientific">Brassica napus var. napus</name>
    <dbReference type="NCBI Taxonomy" id="138011"/>
</organismHost>
<organismHost>
    <name type="scientific">Brassica nigra</name>
    <name type="common">Black mustard</name>
    <name type="synonym">Sinapis nigra</name>
    <dbReference type="NCBI Taxonomy" id="3710"/>
</organismHost>
<organismHost>
    <name type="scientific">Brassica oleracea var. botrytis</name>
    <name type="common">Cauliflower</name>
    <dbReference type="NCBI Taxonomy" id="3715"/>
</organismHost>
<organismHost>
    <name type="scientific">Brassica oleracea var. capitata</name>
    <name type="common">Cabbage</name>
    <dbReference type="NCBI Taxonomy" id="3716"/>
</organismHost>
<organismHost>
    <name type="scientific">Brassica rapa subsp. rapa</name>
    <name type="common">Turnip</name>
    <dbReference type="NCBI Taxonomy" id="51350"/>
</organismHost>
<organismHost>
    <name type="scientific">Capsicum annuum</name>
    <name type="common">Capsicum pepper</name>
    <dbReference type="NCBI Taxonomy" id="4072"/>
</organismHost>
<organismHost>
    <name type="scientific">Cicer arietinum</name>
    <name type="common">Chickpea</name>
    <name type="synonym">Garbanzo</name>
    <dbReference type="NCBI Taxonomy" id="3827"/>
</organismHost>
<organismHost>
    <name type="scientific">Citrullus lanatus</name>
    <name type="common">Watermelon</name>
    <name type="synonym">Citrullus vulgaris</name>
    <dbReference type="NCBI Taxonomy" id="3654"/>
</organismHost>
<organismHost>
    <name type="scientific">Crambe hispanica subsp. abyssinica</name>
    <name type="common">Abyssinian kale</name>
    <name type="synonym">Crambe abyssinica</name>
    <dbReference type="NCBI Taxonomy" id="3721"/>
</organismHost>
<organismHost>
    <name type="scientific">Cucumis sativus</name>
    <name type="common">Cucumber</name>
    <dbReference type="NCBI Taxonomy" id="3659"/>
</organismHost>
<organismHost>
    <name type="scientific">Cucurbita pepo</name>
    <name type="common">Vegetable marrow</name>
    <name type="synonym">Summer squash</name>
    <dbReference type="NCBI Taxonomy" id="3663"/>
</organismHost>
<organismHost>
    <name type="scientific">Glycine max</name>
    <name type="common">Soybean</name>
    <name type="synonym">Glycine hispida</name>
    <dbReference type="NCBI Taxonomy" id="3847"/>
</organismHost>
<organismHost>
    <name type="scientific">Helianthus annuus</name>
    <name type="common">Common sunflower</name>
    <dbReference type="NCBI Taxonomy" id="4232"/>
</organismHost>
<organismHost>
    <name type="scientific">Lactuca sativa</name>
    <name type="common">Garden lettuce</name>
    <dbReference type="NCBI Taxonomy" id="4236"/>
</organismHost>
<organismHost>
    <name type="scientific">Phlox drummondii</name>
    <name type="common">Annual phlox</name>
    <dbReference type="NCBI Taxonomy" id="103529"/>
</organismHost>
<organismHost>
    <name type="scientific">Pisum sativum</name>
    <name type="common">Garden pea</name>
    <name type="synonym">Lathyrus oleraceus</name>
    <dbReference type="NCBI Taxonomy" id="3888"/>
</organismHost>
<organismHost>
    <name type="scientific">Raphanus sativus</name>
    <name type="common">Radish</name>
    <name type="synonym">Raphanus raphanistrum var. sativus</name>
    <dbReference type="NCBI Taxonomy" id="3726"/>
</organismHost>
<organismHost>
    <name type="scientific">Solanum lycopersicum</name>
    <name type="common">Tomato</name>
    <name type="synonym">Lycopersicon esculentum</name>
    <dbReference type="NCBI Taxonomy" id="4081"/>
</organismHost>
<organismHost>
    <name type="scientific">Spinacia oleracea</name>
    <name type="common">Spinach</name>
    <dbReference type="NCBI Taxonomy" id="3562"/>
</organismHost>
<organismHost>
    <name type="scientific">Trifolium subterraneum</name>
    <name type="common">Subterranean clover</name>
    <dbReference type="NCBI Taxonomy" id="3900"/>
</organismHost>
<organismHost>
    <name type="scientific">Vicia faba</name>
    <name type="common">Broad bean</name>
    <name type="synonym">Faba vulgaris</name>
    <dbReference type="NCBI Taxonomy" id="3906"/>
</organismHost>
<gene>
    <name type="ORF">ORF4</name>
</gene>
<organism>
    <name type="scientific">Beet western yellows virus (isolate GB1)</name>
    <name type="common">BWYV</name>
    <dbReference type="NCBI Taxonomy" id="12044"/>
    <lineage>
        <taxon>Viruses</taxon>
        <taxon>Riboviria</taxon>
        <taxon>Orthornavirae</taxon>
        <taxon>Pisuviricota</taxon>
        <taxon>Pisoniviricetes</taxon>
        <taxon>Sobelivirales</taxon>
        <taxon>Solemoviridae</taxon>
        <taxon>Polerovirus</taxon>
        <taxon>Beet western yellows virus</taxon>
    </lineage>
</organism>
<proteinExistence type="inferred from homology"/>